<sequence length="78" mass="8660">MASLIQVRDLLALRGRMEAAQISQTLNTPQPMINAMLQQLESMGKAVRIQEEPDGCLSGSCKSCPEGKACLREWWALR</sequence>
<proteinExistence type="inferred from homology"/>
<reference key="1">
    <citation type="journal article" date="2008" name="J. Bacteriol.">
        <title>The complete genome sequence of Escherichia coli DH10B: insights into the biology of a laboratory workhorse.</title>
        <authorList>
            <person name="Durfee T."/>
            <person name="Nelson R."/>
            <person name="Baldwin S."/>
            <person name="Plunkett G. III"/>
            <person name="Burland V."/>
            <person name="Mau B."/>
            <person name="Petrosino J.F."/>
            <person name="Qin X."/>
            <person name="Muzny D.M."/>
            <person name="Ayele M."/>
            <person name="Gibbs R.A."/>
            <person name="Csorgo B."/>
            <person name="Posfai G."/>
            <person name="Weinstock G.M."/>
            <person name="Blattner F.R."/>
        </authorList>
    </citation>
    <scope>NUCLEOTIDE SEQUENCE [LARGE SCALE GENOMIC DNA]</scope>
    <source>
        <strain>K12 / DH10B</strain>
    </source>
</reference>
<gene>
    <name evidence="1" type="primary">feoC</name>
    <name type="ordered locus">ECDH10B_3585</name>
</gene>
<evidence type="ECO:0000255" key="1">
    <source>
        <dbReference type="HAMAP-Rule" id="MF_01586"/>
    </source>
</evidence>
<name>FEOC_ECODH</name>
<protein>
    <recommendedName>
        <fullName evidence="1">Probable [Fe-S]-dependent transcriptional repressor</fullName>
    </recommendedName>
</protein>
<feature type="chain" id="PRO_1000201319" description="Probable [Fe-S]-dependent transcriptional repressor">
    <location>
        <begin position="1"/>
        <end position="78"/>
    </location>
</feature>
<feature type="binding site" evidence="1">
    <location>
        <position position="56"/>
    </location>
    <ligand>
        <name>iron-sulfur cluster</name>
        <dbReference type="ChEBI" id="CHEBI:30408"/>
    </ligand>
</feature>
<feature type="binding site" evidence="1">
    <location>
        <position position="61"/>
    </location>
    <ligand>
        <name>iron-sulfur cluster</name>
        <dbReference type="ChEBI" id="CHEBI:30408"/>
    </ligand>
</feature>
<feature type="binding site" evidence="1">
    <location>
        <position position="64"/>
    </location>
    <ligand>
        <name>iron-sulfur cluster</name>
        <dbReference type="ChEBI" id="CHEBI:30408"/>
    </ligand>
</feature>
<feature type="binding site" evidence="1">
    <location>
        <position position="70"/>
    </location>
    <ligand>
        <name>iron-sulfur cluster</name>
        <dbReference type="ChEBI" id="CHEBI:30408"/>
    </ligand>
</feature>
<comment type="function">
    <text evidence="1">May function as a transcriptional regulator that controls feoABC expression.</text>
</comment>
<comment type="similarity">
    <text evidence="1">Belongs to the FeoC family.</text>
</comment>
<organism>
    <name type="scientific">Escherichia coli (strain K12 / DH10B)</name>
    <dbReference type="NCBI Taxonomy" id="316385"/>
    <lineage>
        <taxon>Bacteria</taxon>
        <taxon>Pseudomonadati</taxon>
        <taxon>Pseudomonadota</taxon>
        <taxon>Gammaproteobacteria</taxon>
        <taxon>Enterobacterales</taxon>
        <taxon>Enterobacteriaceae</taxon>
        <taxon>Escherichia</taxon>
    </lineage>
</organism>
<keyword id="KW-0238">DNA-binding</keyword>
<keyword id="KW-0408">Iron</keyword>
<keyword id="KW-0411">Iron-sulfur</keyword>
<keyword id="KW-0479">Metal-binding</keyword>
<keyword id="KW-0678">Repressor</keyword>
<keyword id="KW-0804">Transcription</keyword>
<keyword id="KW-0805">Transcription regulation</keyword>
<accession>B1X757</accession>
<dbReference type="EMBL" id="CP000948">
    <property type="protein sequence ID" value="ACB04469.1"/>
    <property type="molecule type" value="Genomic_DNA"/>
</dbReference>
<dbReference type="RefSeq" id="WP_000157586.1">
    <property type="nucleotide sequence ID" value="NC_010473.1"/>
</dbReference>
<dbReference type="BMRB" id="B1X757"/>
<dbReference type="SMR" id="B1X757"/>
<dbReference type="GeneID" id="86948257"/>
<dbReference type="KEGG" id="ecd:ECDH10B_3585"/>
<dbReference type="HOGENOM" id="CLU_189182_0_0_6"/>
<dbReference type="GO" id="GO:0003677">
    <property type="term" value="F:DNA binding"/>
    <property type="evidence" value="ECO:0007669"/>
    <property type="project" value="UniProtKB-KW"/>
</dbReference>
<dbReference type="GO" id="GO:0005506">
    <property type="term" value="F:iron ion binding"/>
    <property type="evidence" value="ECO:0007669"/>
    <property type="project" value="UniProtKB-UniRule"/>
</dbReference>
<dbReference type="GO" id="GO:0051536">
    <property type="term" value="F:iron-sulfur cluster binding"/>
    <property type="evidence" value="ECO:0007669"/>
    <property type="project" value="UniProtKB-KW"/>
</dbReference>
<dbReference type="Gene3D" id="1.10.10.10">
    <property type="entry name" value="Winged helix-like DNA-binding domain superfamily/Winged helix DNA-binding domain"/>
    <property type="match status" value="1"/>
</dbReference>
<dbReference type="HAMAP" id="MF_01586">
    <property type="entry name" value="FeoC"/>
    <property type="match status" value="1"/>
</dbReference>
<dbReference type="InterPro" id="IPR023732">
    <property type="entry name" value="FeoC"/>
</dbReference>
<dbReference type="InterPro" id="IPR015102">
    <property type="entry name" value="Tscrpt_reg_HTH_FeoC"/>
</dbReference>
<dbReference type="InterPro" id="IPR036388">
    <property type="entry name" value="WH-like_DNA-bd_sf"/>
</dbReference>
<dbReference type="InterPro" id="IPR036390">
    <property type="entry name" value="WH_DNA-bd_sf"/>
</dbReference>
<dbReference type="NCBIfam" id="NF011960">
    <property type="entry name" value="PRK15431.1"/>
    <property type="match status" value="1"/>
</dbReference>
<dbReference type="Pfam" id="PF09012">
    <property type="entry name" value="FeoC"/>
    <property type="match status" value="1"/>
</dbReference>
<dbReference type="SUPFAM" id="SSF46785">
    <property type="entry name" value="Winged helix' DNA-binding domain"/>
    <property type="match status" value="1"/>
</dbReference>